<protein>
    <recommendedName>
        <fullName evidence="1">NAD(P)H-quinone oxidoreductase subunit I</fullName>
        <ecNumber evidence="1">7.1.1.-</ecNumber>
    </recommendedName>
    <alternativeName>
        <fullName evidence="1">NAD(P)H dehydrogenase I subunit I</fullName>
    </alternativeName>
    <alternativeName>
        <fullName evidence="1">NDH-1 subunit I</fullName>
        <shortName evidence="1">NDH-I</shortName>
    </alternativeName>
</protein>
<reference key="1">
    <citation type="journal article" date="2007" name="PLoS Genet.">
        <title>Patterns and implications of gene gain and loss in the evolution of Prochlorococcus.</title>
        <authorList>
            <person name="Kettler G.C."/>
            <person name="Martiny A.C."/>
            <person name="Huang K."/>
            <person name="Zucker J."/>
            <person name="Coleman M.L."/>
            <person name="Rodrigue S."/>
            <person name="Chen F."/>
            <person name="Lapidus A."/>
            <person name="Ferriera S."/>
            <person name="Johnson J."/>
            <person name="Steglich C."/>
            <person name="Church G.M."/>
            <person name="Richardson P."/>
            <person name="Chisholm S.W."/>
        </authorList>
    </citation>
    <scope>NUCLEOTIDE SEQUENCE [LARGE SCALE GENOMIC DNA]</scope>
    <source>
        <strain>NATL1A</strain>
    </source>
</reference>
<keyword id="KW-0004">4Fe-4S</keyword>
<keyword id="KW-0408">Iron</keyword>
<keyword id="KW-0411">Iron-sulfur</keyword>
<keyword id="KW-0472">Membrane</keyword>
<keyword id="KW-0479">Metal-binding</keyword>
<keyword id="KW-0520">NAD</keyword>
<keyword id="KW-0521">NADP</keyword>
<keyword id="KW-0618">Plastoquinone</keyword>
<keyword id="KW-0874">Quinone</keyword>
<keyword id="KW-0677">Repeat</keyword>
<keyword id="KW-0793">Thylakoid</keyword>
<keyword id="KW-1278">Translocase</keyword>
<proteinExistence type="inferred from homology"/>
<organism>
    <name type="scientific">Prochlorococcus marinus (strain NATL1A)</name>
    <dbReference type="NCBI Taxonomy" id="167555"/>
    <lineage>
        <taxon>Bacteria</taxon>
        <taxon>Bacillati</taxon>
        <taxon>Cyanobacteriota</taxon>
        <taxon>Cyanophyceae</taxon>
        <taxon>Synechococcales</taxon>
        <taxon>Prochlorococcaceae</taxon>
        <taxon>Prochlorococcus</taxon>
    </lineage>
</organism>
<feature type="chain" id="PRO_0000298535" description="NAD(P)H-quinone oxidoreductase subunit I">
    <location>
        <begin position="1"/>
        <end position="218"/>
    </location>
</feature>
<feature type="domain" description="4Fe-4S ferredoxin-type 1" evidence="1">
    <location>
        <begin position="55"/>
        <end position="84"/>
    </location>
</feature>
<feature type="domain" description="4Fe-4S ferredoxin-type 2" evidence="1">
    <location>
        <begin position="95"/>
        <end position="124"/>
    </location>
</feature>
<feature type="region of interest" description="Disordered" evidence="2">
    <location>
        <begin position="169"/>
        <end position="218"/>
    </location>
</feature>
<feature type="compositionally biased region" description="Basic and acidic residues" evidence="2">
    <location>
        <begin position="192"/>
        <end position="201"/>
    </location>
</feature>
<feature type="compositionally biased region" description="Polar residues" evidence="2">
    <location>
        <begin position="202"/>
        <end position="218"/>
    </location>
</feature>
<feature type="binding site" evidence="1">
    <location>
        <position position="64"/>
    </location>
    <ligand>
        <name>[4Fe-4S] cluster</name>
        <dbReference type="ChEBI" id="CHEBI:49883"/>
        <label>1</label>
    </ligand>
</feature>
<feature type="binding site" evidence="1">
    <location>
        <position position="67"/>
    </location>
    <ligand>
        <name>[4Fe-4S] cluster</name>
        <dbReference type="ChEBI" id="CHEBI:49883"/>
        <label>1</label>
    </ligand>
</feature>
<feature type="binding site" evidence="1">
    <location>
        <position position="70"/>
    </location>
    <ligand>
        <name>[4Fe-4S] cluster</name>
        <dbReference type="ChEBI" id="CHEBI:49883"/>
        <label>1</label>
    </ligand>
</feature>
<feature type="binding site" evidence="1">
    <location>
        <position position="74"/>
    </location>
    <ligand>
        <name>[4Fe-4S] cluster</name>
        <dbReference type="ChEBI" id="CHEBI:49883"/>
        <label>2</label>
    </ligand>
</feature>
<feature type="binding site" evidence="1">
    <location>
        <position position="104"/>
    </location>
    <ligand>
        <name>[4Fe-4S] cluster</name>
        <dbReference type="ChEBI" id="CHEBI:49883"/>
        <label>2</label>
    </ligand>
</feature>
<feature type="binding site" evidence="1">
    <location>
        <position position="107"/>
    </location>
    <ligand>
        <name>[4Fe-4S] cluster</name>
        <dbReference type="ChEBI" id="CHEBI:49883"/>
        <label>2</label>
    </ligand>
</feature>
<feature type="binding site" evidence="1">
    <location>
        <position position="110"/>
    </location>
    <ligand>
        <name>[4Fe-4S] cluster</name>
        <dbReference type="ChEBI" id="CHEBI:49883"/>
        <label>2</label>
    </ligand>
</feature>
<feature type="binding site" evidence="1">
    <location>
        <position position="114"/>
    </location>
    <ligand>
        <name>[4Fe-4S] cluster</name>
        <dbReference type="ChEBI" id="CHEBI:49883"/>
        <label>1</label>
    </ligand>
</feature>
<name>NDHI_PROM1</name>
<evidence type="ECO:0000255" key="1">
    <source>
        <dbReference type="HAMAP-Rule" id="MF_01351"/>
    </source>
</evidence>
<evidence type="ECO:0000256" key="2">
    <source>
        <dbReference type="SAM" id="MobiDB-lite"/>
    </source>
</evidence>
<gene>
    <name evidence="1" type="primary">ndhI</name>
    <name type="ordered locus">NATL1_02321</name>
</gene>
<sequence length="218" mass="24829">MLGFLEKVADYTKEAVSAAKYLVDGLGVTFDHMRRRPVTVQYPYEKLIPSERYRGRIHYEFDKCIACEVCVRVCPINLPVVDWVMNKETKKKELRNYSIDFGACIFCGNCVEYCPTNCLSMTEEYELSAFDRHSLNYDNVALGRLPTSVTSDPSVRPLRELPYLPKGIMDPHELPANQQRAGKLPSQIIKELQAEKSEEKGNNNSSDIVPNKLNSTNK</sequence>
<dbReference type="EC" id="7.1.1.-" evidence="1"/>
<dbReference type="EMBL" id="CP000553">
    <property type="protein sequence ID" value="ABM74796.1"/>
    <property type="molecule type" value="Genomic_DNA"/>
</dbReference>
<dbReference type="RefSeq" id="WP_011823019.1">
    <property type="nucleotide sequence ID" value="NC_008819.1"/>
</dbReference>
<dbReference type="SMR" id="A2BZY6"/>
<dbReference type="KEGG" id="pme:NATL1_02321"/>
<dbReference type="eggNOG" id="COG1143">
    <property type="taxonomic scope" value="Bacteria"/>
</dbReference>
<dbReference type="HOGENOM" id="CLU_122804_0_0_3"/>
<dbReference type="Proteomes" id="UP000002592">
    <property type="component" value="Chromosome"/>
</dbReference>
<dbReference type="GO" id="GO:0031676">
    <property type="term" value="C:plasma membrane-derived thylakoid membrane"/>
    <property type="evidence" value="ECO:0007669"/>
    <property type="project" value="UniProtKB-SubCell"/>
</dbReference>
<dbReference type="GO" id="GO:0051539">
    <property type="term" value="F:4 iron, 4 sulfur cluster binding"/>
    <property type="evidence" value="ECO:0007669"/>
    <property type="project" value="UniProtKB-KW"/>
</dbReference>
<dbReference type="GO" id="GO:0005506">
    <property type="term" value="F:iron ion binding"/>
    <property type="evidence" value="ECO:0007669"/>
    <property type="project" value="UniProtKB-UniRule"/>
</dbReference>
<dbReference type="GO" id="GO:0008137">
    <property type="term" value="F:NADH dehydrogenase (ubiquinone) activity"/>
    <property type="evidence" value="ECO:0007669"/>
    <property type="project" value="InterPro"/>
</dbReference>
<dbReference type="GO" id="GO:0048038">
    <property type="term" value="F:quinone binding"/>
    <property type="evidence" value="ECO:0007669"/>
    <property type="project" value="UniProtKB-KW"/>
</dbReference>
<dbReference type="GO" id="GO:0019684">
    <property type="term" value="P:photosynthesis, light reaction"/>
    <property type="evidence" value="ECO:0007669"/>
    <property type="project" value="UniProtKB-UniRule"/>
</dbReference>
<dbReference type="Gene3D" id="3.30.70.3270">
    <property type="match status" value="1"/>
</dbReference>
<dbReference type="HAMAP" id="MF_01351">
    <property type="entry name" value="NDH1_NuoI"/>
    <property type="match status" value="1"/>
</dbReference>
<dbReference type="InterPro" id="IPR017896">
    <property type="entry name" value="4Fe4S_Fe-S-bd"/>
</dbReference>
<dbReference type="InterPro" id="IPR017900">
    <property type="entry name" value="4Fe4S_Fe_S_CS"/>
</dbReference>
<dbReference type="InterPro" id="IPR010226">
    <property type="entry name" value="NADH_quinone_OxRdtase_chainI"/>
</dbReference>
<dbReference type="InterPro" id="IPR004497">
    <property type="entry name" value="NDHI"/>
</dbReference>
<dbReference type="NCBIfam" id="TIGR00403">
    <property type="entry name" value="ndhI"/>
    <property type="match status" value="1"/>
</dbReference>
<dbReference type="NCBIfam" id="TIGR01971">
    <property type="entry name" value="NuoI"/>
    <property type="match status" value="1"/>
</dbReference>
<dbReference type="NCBIfam" id="NF004537">
    <property type="entry name" value="PRK05888.1-3"/>
    <property type="match status" value="1"/>
</dbReference>
<dbReference type="PANTHER" id="PTHR47275">
    <property type="entry name" value="NAD(P)H-QUINONE OXIDOREDUCTASE SUBUNIT I, CHLOROPLASTIC"/>
    <property type="match status" value="1"/>
</dbReference>
<dbReference type="PANTHER" id="PTHR47275:SF1">
    <property type="entry name" value="NAD(P)H-QUINONE OXIDOREDUCTASE SUBUNIT I, CHLOROPLASTIC"/>
    <property type="match status" value="1"/>
</dbReference>
<dbReference type="Pfam" id="PF12838">
    <property type="entry name" value="Fer4_7"/>
    <property type="match status" value="1"/>
</dbReference>
<dbReference type="SUPFAM" id="SSF54862">
    <property type="entry name" value="4Fe-4S ferredoxins"/>
    <property type="match status" value="1"/>
</dbReference>
<dbReference type="PROSITE" id="PS00198">
    <property type="entry name" value="4FE4S_FER_1"/>
    <property type="match status" value="2"/>
</dbReference>
<dbReference type="PROSITE" id="PS51379">
    <property type="entry name" value="4FE4S_FER_2"/>
    <property type="match status" value="2"/>
</dbReference>
<comment type="function">
    <text evidence="1">NDH-1 shuttles electrons from an unknown electron donor, via FMN and iron-sulfur (Fe-S) centers, to quinones in the respiratory and/or the photosynthetic chain. The immediate electron acceptor for the enzyme in this species is believed to be plastoquinone. Couples the redox reaction to proton translocation, and thus conserves the redox energy in a proton gradient.</text>
</comment>
<comment type="catalytic activity">
    <reaction evidence="1">
        <text>a plastoquinone + NADH + (n+1) H(+)(in) = a plastoquinol + NAD(+) + n H(+)(out)</text>
        <dbReference type="Rhea" id="RHEA:42608"/>
        <dbReference type="Rhea" id="RHEA-COMP:9561"/>
        <dbReference type="Rhea" id="RHEA-COMP:9562"/>
        <dbReference type="ChEBI" id="CHEBI:15378"/>
        <dbReference type="ChEBI" id="CHEBI:17757"/>
        <dbReference type="ChEBI" id="CHEBI:57540"/>
        <dbReference type="ChEBI" id="CHEBI:57945"/>
        <dbReference type="ChEBI" id="CHEBI:62192"/>
    </reaction>
</comment>
<comment type="catalytic activity">
    <reaction evidence="1">
        <text>a plastoquinone + NADPH + (n+1) H(+)(in) = a plastoquinol + NADP(+) + n H(+)(out)</text>
        <dbReference type="Rhea" id="RHEA:42612"/>
        <dbReference type="Rhea" id="RHEA-COMP:9561"/>
        <dbReference type="Rhea" id="RHEA-COMP:9562"/>
        <dbReference type="ChEBI" id="CHEBI:15378"/>
        <dbReference type="ChEBI" id="CHEBI:17757"/>
        <dbReference type="ChEBI" id="CHEBI:57783"/>
        <dbReference type="ChEBI" id="CHEBI:58349"/>
        <dbReference type="ChEBI" id="CHEBI:62192"/>
    </reaction>
</comment>
<comment type="cofactor">
    <cofactor evidence="1">
        <name>[4Fe-4S] cluster</name>
        <dbReference type="ChEBI" id="CHEBI:49883"/>
    </cofactor>
    <text evidence="1">Binds 2 [4Fe-4S] clusters per subunit.</text>
</comment>
<comment type="subunit">
    <text evidence="1">NDH-1 is composed of at least 11 different subunits.</text>
</comment>
<comment type="subcellular location">
    <subcellularLocation>
        <location evidence="1">Cellular thylakoid membrane</location>
        <topology evidence="1">Peripheral membrane protein</topology>
    </subcellularLocation>
</comment>
<comment type="similarity">
    <text evidence="1">Belongs to the complex I 23 kDa subunit family.</text>
</comment>
<accession>A2BZY6</accession>